<keyword id="KW-0270">Exopolysaccharide synthesis</keyword>
<keyword id="KW-0328">Glycosyltransferase</keyword>
<keyword id="KW-0808">Transferase</keyword>
<keyword id="KW-0843">Virulence</keyword>
<protein>
    <recommendedName>
        <fullName>GDP-mannose:cellobiosyl-diphosphopolyprenol alpha-mannosyltransferase</fullName>
        <ecNumber>2.4.1.252</ecNumber>
    </recommendedName>
    <alternativeName>
        <fullName>Exopolysaccharide xanthan biosynthesis glycosyltransferase GumH</fullName>
    </alternativeName>
</protein>
<dbReference type="EC" id="2.4.1.252"/>
<dbReference type="EMBL" id="U22511">
    <property type="protein sequence ID" value="AAA86376.1"/>
    <property type="molecule type" value="Genomic_DNA"/>
</dbReference>
<dbReference type="PIR" id="S67857">
    <property type="entry name" value="S67857"/>
</dbReference>
<dbReference type="SMR" id="Q56774"/>
<dbReference type="CAZy" id="GT4">
    <property type="family name" value="Glycosyltransferase Family 4"/>
</dbReference>
<dbReference type="eggNOG" id="COG0438">
    <property type="taxonomic scope" value="Bacteria"/>
</dbReference>
<dbReference type="BioCyc" id="MetaCyc:MONOMER-15981"/>
<dbReference type="GO" id="GO:0016757">
    <property type="term" value="F:glycosyltransferase activity"/>
    <property type="evidence" value="ECO:0007669"/>
    <property type="project" value="UniProtKB-KW"/>
</dbReference>
<dbReference type="GO" id="GO:0000271">
    <property type="term" value="P:polysaccharide biosynthetic process"/>
    <property type="evidence" value="ECO:0007669"/>
    <property type="project" value="UniProtKB-KW"/>
</dbReference>
<dbReference type="CDD" id="cd03801">
    <property type="entry name" value="GT4_PimA-like"/>
    <property type="match status" value="1"/>
</dbReference>
<dbReference type="Gene3D" id="3.40.50.2000">
    <property type="entry name" value="Glycogen Phosphorylase B"/>
    <property type="match status" value="2"/>
</dbReference>
<dbReference type="InterPro" id="IPR001296">
    <property type="entry name" value="Glyco_trans_1"/>
</dbReference>
<dbReference type="InterPro" id="IPR028098">
    <property type="entry name" value="Glyco_trans_4-like_N"/>
</dbReference>
<dbReference type="InterPro" id="IPR050194">
    <property type="entry name" value="Glycosyltransferase_grp1"/>
</dbReference>
<dbReference type="PANTHER" id="PTHR45947">
    <property type="entry name" value="SULFOQUINOVOSYL TRANSFERASE SQD2"/>
    <property type="match status" value="1"/>
</dbReference>
<dbReference type="PANTHER" id="PTHR45947:SF3">
    <property type="entry name" value="SULFOQUINOVOSYL TRANSFERASE SQD2"/>
    <property type="match status" value="1"/>
</dbReference>
<dbReference type="Pfam" id="PF13439">
    <property type="entry name" value="Glyco_transf_4"/>
    <property type="match status" value="1"/>
</dbReference>
<dbReference type="Pfam" id="PF00534">
    <property type="entry name" value="Glycos_transf_1"/>
    <property type="match status" value="1"/>
</dbReference>
<dbReference type="SUPFAM" id="SSF53756">
    <property type="entry name" value="UDP-Glycosyltransferase/glycogen phosphorylase"/>
    <property type="match status" value="1"/>
</dbReference>
<sequence length="380" mass="42110">MKVVHVVRQFHPSIGGMEEVVLNVARQHQANSADTVEIVTLDRVFTDPSAQLAQHELHQGLSITRIGYRGSSRYPIAPSVLGAIRSADVVHLHGIDFFYDYLALTKPLHGKPMVVSTHGGFFHTAYASRMKQIWFQTLTRTSALAYARVIATSENDGDLFAKVVAPSRLRVIENGVDVEKYAGQGARAPGRTMLYFGRWSVNKGLIETLELLQAALTRDPQWRLIIAGREYDLNEADLRKAIAERGLQDKVQLSMSPSQQQLCALMQQAQFFVCLSRHEGFGIAAVEAMSAGLIPILSDIPPFVRLATESGQGVIVNRDRIQAAADSVQALALQANADFDARRTATMAYVARYDWRHVVGRYIDEYHAALGTPRTQEAVR</sequence>
<name>GUMH_XANCA</name>
<organism>
    <name type="scientific">Xanthomonas campestris</name>
    <dbReference type="NCBI Taxonomy" id="339"/>
    <lineage>
        <taxon>Bacteria</taxon>
        <taxon>Pseudomonadati</taxon>
        <taxon>Pseudomonadota</taxon>
        <taxon>Gammaproteobacteria</taxon>
        <taxon>Lysobacterales</taxon>
        <taxon>Lysobacteraceae</taxon>
        <taxon>Xanthomonas</taxon>
    </lineage>
</organism>
<comment type="function">
    <text evidence="1 2">Involved in the biosynthesis of the exopolysaccharide xanthan, a polymer that is comprised of repeating pentasaccharide units with the structure of a beta-(1,4)-linked D-glucose backbone with trisaccharide side chains composed of mannose-beta-(1,4)-glucuronic acid-beta-(1,2)-mannose attached to alternate glucose residues in the backbone by alpha-(1,3) linkages. Xanthan is involved in pathogenicity but has also been used in a variety of applications as a specialty polymer for commercial applications, including food additives, where they act as viscosifying, stabilizing, emulsifying, or gelling agents.</text>
</comment>
<comment type="catalytic activity">
    <reaction evidence="2">
        <text>beta-D-Glc-(1-&gt;4)-alpha-D-Glc-di-trans,octa-cis-undecaprenyl diphosphate + GDP-alpha-D-mannose = alpha-D-Man-(1-&gt;3)-beta-D-Glc-(1-&gt;4)-alpha-D-Glc-1-di-trans,octa-cis-undecaprenyl diphosphate + GDP + H(+)</text>
        <dbReference type="Rhea" id="RHEA:28310"/>
        <dbReference type="ChEBI" id="CHEBI:15378"/>
        <dbReference type="ChEBI" id="CHEBI:57527"/>
        <dbReference type="ChEBI" id="CHEBI:58189"/>
        <dbReference type="ChEBI" id="CHEBI:61247"/>
        <dbReference type="ChEBI" id="CHEBI:61252"/>
        <dbReference type="EC" id="2.4.1.252"/>
    </reaction>
</comment>
<comment type="similarity">
    <text evidence="3">Belongs to the glycosyltransferase group 1 family. Glycosyltransferase 4 subfamily.</text>
</comment>
<gene>
    <name type="primary">gumH</name>
</gene>
<feature type="chain" id="PRO_0000424204" description="GDP-mannose:cellobiosyl-diphosphopolyprenol alpha-mannosyltransferase">
    <location>
        <begin position="1"/>
        <end position="380"/>
    </location>
</feature>
<reference key="1">
    <citation type="submission" date="1995-04" db="EMBL/GenBank/DDBJ databases">
        <title>Recombinant-DNA mediated production of xanthan gum.</title>
        <authorList>
            <person name="Capage M.A."/>
            <person name="Doherty D.H."/>
            <person name="Betlach M.R."/>
            <person name="Vanderslice R.W."/>
        </authorList>
    </citation>
    <scope>NUCLEOTIDE SEQUENCE [GENOMIC DNA]</scope>
    <source>
        <strain>B1459</strain>
    </source>
</reference>
<reference key="2">
    <citation type="journal article" date="1998" name="J. Bacteriol.">
        <title>Xanthomonas campestris pv. campestris gum mutants: effects on xanthan biosynthesis and plant virulence.</title>
        <authorList>
            <person name="Katzen F."/>
            <person name="Ferreiro D.U."/>
            <person name="Oddo C.G."/>
            <person name="Ielmini M.V."/>
            <person name="Becker A."/>
            <person name="Puhler A."/>
            <person name="Ielpi L."/>
        </authorList>
    </citation>
    <scope>FUNCTION</scope>
    <scope>CATALYTIC ACTIVITY</scope>
</reference>
<reference key="3">
    <citation type="journal article" date="2000" name="J. Biol. Chem.">
        <title>Identification of essential amino acids in the bacterial alpha -mannosyltransferase aceA.</title>
        <authorList>
            <person name="Abdian P.L."/>
            <person name="Lellouch A.C."/>
            <person name="Gautier C."/>
            <person name="Ielpi L."/>
            <person name="Geremia R.A."/>
        </authorList>
    </citation>
    <scope>FUNCTION</scope>
</reference>
<accession>Q56774</accession>
<proteinExistence type="evidence at protein level"/>
<evidence type="ECO:0000269" key="1">
    <source>
    </source>
</evidence>
<evidence type="ECO:0000269" key="2">
    <source>
    </source>
</evidence>
<evidence type="ECO:0000305" key="3"/>